<dbReference type="EMBL" id="AL111168">
    <property type="protein sequence ID" value="CAL34182.1"/>
    <property type="molecule type" value="Genomic_DNA"/>
</dbReference>
<dbReference type="PIR" id="D81415">
    <property type="entry name" value="D81415"/>
</dbReference>
<dbReference type="RefSeq" id="WP_002858822.1">
    <property type="nucleotide sequence ID" value="NZ_SZUC01000002.1"/>
</dbReference>
<dbReference type="RefSeq" id="YP_002343473.1">
    <property type="nucleotide sequence ID" value="NC_002163.1"/>
</dbReference>
<dbReference type="SMR" id="Q9PJB0"/>
<dbReference type="IntAct" id="Q9PJB0">
    <property type="interactions" value="7"/>
</dbReference>
<dbReference type="STRING" id="192222.Cj0001"/>
<dbReference type="PaxDb" id="192222-Cj0001"/>
<dbReference type="EnsemblBacteria" id="CAL34182">
    <property type="protein sequence ID" value="CAL34182"/>
    <property type="gene ID" value="Cj0001"/>
</dbReference>
<dbReference type="GeneID" id="904342"/>
<dbReference type="KEGG" id="cje:Cj0001"/>
<dbReference type="PATRIC" id="fig|192222.6.peg.1"/>
<dbReference type="eggNOG" id="COG0593">
    <property type="taxonomic scope" value="Bacteria"/>
</dbReference>
<dbReference type="HOGENOM" id="CLU_026910_3_1_7"/>
<dbReference type="OrthoDB" id="9807019at2"/>
<dbReference type="Proteomes" id="UP000000799">
    <property type="component" value="Chromosome"/>
</dbReference>
<dbReference type="GO" id="GO:0005737">
    <property type="term" value="C:cytoplasm"/>
    <property type="evidence" value="ECO:0007669"/>
    <property type="project" value="UniProtKB-SubCell"/>
</dbReference>
<dbReference type="GO" id="GO:0005886">
    <property type="term" value="C:plasma membrane"/>
    <property type="evidence" value="ECO:0007669"/>
    <property type="project" value="TreeGrafter"/>
</dbReference>
<dbReference type="GO" id="GO:0005524">
    <property type="term" value="F:ATP binding"/>
    <property type="evidence" value="ECO:0007669"/>
    <property type="project" value="UniProtKB-UniRule"/>
</dbReference>
<dbReference type="GO" id="GO:0016887">
    <property type="term" value="F:ATP hydrolysis activity"/>
    <property type="evidence" value="ECO:0007669"/>
    <property type="project" value="InterPro"/>
</dbReference>
<dbReference type="GO" id="GO:0003688">
    <property type="term" value="F:DNA replication origin binding"/>
    <property type="evidence" value="ECO:0007669"/>
    <property type="project" value="UniProtKB-UniRule"/>
</dbReference>
<dbReference type="GO" id="GO:0008289">
    <property type="term" value="F:lipid binding"/>
    <property type="evidence" value="ECO:0007669"/>
    <property type="project" value="UniProtKB-KW"/>
</dbReference>
<dbReference type="GO" id="GO:0006270">
    <property type="term" value="P:DNA replication initiation"/>
    <property type="evidence" value="ECO:0007669"/>
    <property type="project" value="UniProtKB-UniRule"/>
</dbReference>
<dbReference type="GO" id="GO:0006275">
    <property type="term" value="P:regulation of DNA replication"/>
    <property type="evidence" value="ECO:0007669"/>
    <property type="project" value="UniProtKB-UniRule"/>
</dbReference>
<dbReference type="CDD" id="cd00009">
    <property type="entry name" value="AAA"/>
    <property type="match status" value="1"/>
</dbReference>
<dbReference type="CDD" id="cd06571">
    <property type="entry name" value="Bac_DnaA_C"/>
    <property type="match status" value="1"/>
</dbReference>
<dbReference type="Gene3D" id="1.10.1750.10">
    <property type="match status" value="1"/>
</dbReference>
<dbReference type="Gene3D" id="1.10.8.60">
    <property type="match status" value="1"/>
</dbReference>
<dbReference type="Gene3D" id="3.30.300.180">
    <property type="match status" value="1"/>
</dbReference>
<dbReference type="Gene3D" id="3.40.50.300">
    <property type="entry name" value="P-loop containing nucleotide triphosphate hydrolases"/>
    <property type="match status" value="1"/>
</dbReference>
<dbReference type="HAMAP" id="MF_00377">
    <property type="entry name" value="DnaA_bact"/>
    <property type="match status" value="1"/>
</dbReference>
<dbReference type="InterPro" id="IPR003593">
    <property type="entry name" value="AAA+_ATPase"/>
</dbReference>
<dbReference type="InterPro" id="IPR001957">
    <property type="entry name" value="Chromosome_initiator_DnaA"/>
</dbReference>
<dbReference type="InterPro" id="IPR020591">
    <property type="entry name" value="Chromosome_initiator_DnaA-like"/>
</dbReference>
<dbReference type="InterPro" id="IPR018312">
    <property type="entry name" value="Chromosome_initiator_DnaA_CS"/>
</dbReference>
<dbReference type="InterPro" id="IPR013159">
    <property type="entry name" value="DnaA_C"/>
</dbReference>
<dbReference type="InterPro" id="IPR013317">
    <property type="entry name" value="DnaA_dom"/>
</dbReference>
<dbReference type="InterPro" id="IPR024633">
    <property type="entry name" value="DnaA_N_dom"/>
</dbReference>
<dbReference type="InterPro" id="IPR038454">
    <property type="entry name" value="DnaA_N_sf"/>
</dbReference>
<dbReference type="InterPro" id="IPR027417">
    <property type="entry name" value="P-loop_NTPase"/>
</dbReference>
<dbReference type="InterPro" id="IPR010921">
    <property type="entry name" value="Trp_repressor/repl_initiator"/>
</dbReference>
<dbReference type="NCBIfam" id="TIGR00362">
    <property type="entry name" value="DnaA"/>
    <property type="match status" value="1"/>
</dbReference>
<dbReference type="PANTHER" id="PTHR30050">
    <property type="entry name" value="CHROMOSOMAL REPLICATION INITIATOR PROTEIN DNAA"/>
    <property type="match status" value="1"/>
</dbReference>
<dbReference type="PANTHER" id="PTHR30050:SF2">
    <property type="entry name" value="CHROMOSOMAL REPLICATION INITIATOR PROTEIN DNAA"/>
    <property type="match status" value="1"/>
</dbReference>
<dbReference type="Pfam" id="PF00308">
    <property type="entry name" value="Bac_DnaA"/>
    <property type="match status" value="1"/>
</dbReference>
<dbReference type="Pfam" id="PF08299">
    <property type="entry name" value="Bac_DnaA_C"/>
    <property type="match status" value="1"/>
</dbReference>
<dbReference type="Pfam" id="PF11638">
    <property type="entry name" value="DnaA_N"/>
    <property type="match status" value="1"/>
</dbReference>
<dbReference type="PRINTS" id="PR00051">
    <property type="entry name" value="DNAA"/>
</dbReference>
<dbReference type="SMART" id="SM00382">
    <property type="entry name" value="AAA"/>
    <property type="match status" value="1"/>
</dbReference>
<dbReference type="SMART" id="SM00760">
    <property type="entry name" value="Bac_DnaA_C"/>
    <property type="match status" value="1"/>
</dbReference>
<dbReference type="SUPFAM" id="SSF52540">
    <property type="entry name" value="P-loop containing nucleoside triphosphate hydrolases"/>
    <property type="match status" value="1"/>
</dbReference>
<dbReference type="SUPFAM" id="SSF48295">
    <property type="entry name" value="TrpR-like"/>
    <property type="match status" value="1"/>
</dbReference>
<dbReference type="PROSITE" id="PS01008">
    <property type="entry name" value="DNAA"/>
    <property type="match status" value="1"/>
</dbReference>
<proteinExistence type="inferred from homology"/>
<feature type="chain" id="PRO_0000114152" description="Chromosomal replication initiator protein DnaA">
    <location>
        <begin position="1"/>
        <end position="440"/>
    </location>
</feature>
<feature type="region of interest" description="Domain I, interacts with DnaA modulators" evidence="1">
    <location>
        <begin position="1"/>
        <end position="74"/>
    </location>
</feature>
<feature type="region of interest" description="Domain II" evidence="1">
    <location>
        <begin position="74"/>
        <end position="99"/>
    </location>
</feature>
<feature type="region of interest" description="Domain III, AAA+ region" evidence="1">
    <location>
        <begin position="100"/>
        <end position="316"/>
    </location>
</feature>
<feature type="region of interest" description="Domain IV, binds dsDNA" evidence="1">
    <location>
        <begin position="317"/>
        <end position="440"/>
    </location>
</feature>
<feature type="binding site" evidence="1">
    <location>
        <position position="146"/>
    </location>
    <ligand>
        <name>ATP</name>
        <dbReference type="ChEBI" id="CHEBI:30616"/>
    </ligand>
</feature>
<feature type="binding site" evidence="1">
    <location>
        <position position="148"/>
    </location>
    <ligand>
        <name>ATP</name>
        <dbReference type="ChEBI" id="CHEBI:30616"/>
    </ligand>
</feature>
<feature type="binding site" evidence="1">
    <location>
        <position position="149"/>
    </location>
    <ligand>
        <name>ATP</name>
        <dbReference type="ChEBI" id="CHEBI:30616"/>
    </ligand>
</feature>
<feature type="binding site" evidence="1">
    <location>
        <position position="150"/>
    </location>
    <ligand>
        <name>ATP</name>
        <dbReference type="ChEBI" id="CHEBI:30616"/>
    </ligand>
</feature>
<gene>
    <name evidence="1" type="primary">dnaA</name>
    <name type="ordered locus">Cj0001</name>
</gene>
<reference key="1">
    <citation type="journal article" date="2000" name="Nature">
        <title>The genome sequence of the food-borne pathogen Campylobacter jejuni reveals hypervariable sequences.</title>
        <authorList>
            <person name="Parkhill J."/>
            <person name="Wren B.W."/>
            <person name="Mungall K.L."/>
            <person name="Ketley J.M."/>
            <person name="Churcher C.M."/>
            <person name="Basham D."/>
            <person name="Chillingworth T."/>
            <person name="Davies R.M."/>
            <person name="Feltwell T."/>
            <person name="Holroyd S."/>
            <person name="Jagels K."/>
            <person name="Karlyshev A.V."/>
            <person name="Moule S."/>
            <person name="Pallen M.J."/>
            <person name="Penn C.W."/>
            <person name="Quail M.A."/>
            <person name="Rajandream M.A."/>
            <person name="Rutherford K.M."/>
            <person name="van Vliet A.H.M."/>
            <person name="Whitehead S."/>
            <person name="Barrell B.G."/>
        </authorList>
    </citation>
    <scope>NUCLEOTIDE SEQUENCE [LARGE SCALE GENOMIC DNA]</scope>
    <source>
        <strain>ATCC 700819 / NCTC 11168</strain>
    </source>
</reference>
<accession>Q9PJB0</accession>
<accession>Q0PCC4</accession>
<comment type="function">
    <text evidence="1">Plays an essential role in the initiation and regulation of chromosomal replication. ATP-DnaA binds to the origin of replication (oriC) to initiate formation of the DNA replication initiation complex once per cell cycle. Binds the DnaA box (a 9 base pair repeat at the origin) and separates the double-stranded (ds)DNA. Forms a right-handed helical filament on oriC DNA; dsDNA binds to the exterior of the filament while single-stranded (ss)DNA is stabiized in the filament's interior. The ATP-DnaA-oriC complex binds and stabilizes one strand of the AT-rich DNA unwinding element (DUE), permitting loading of DNA polymerase. After initiation quickly degrades to an ADP-DnaA complex that is not apt for DNA replication. Binds acidic phospholipids.</text>
</comment>
<comment type="subunit">
    <text evidence="1">Oligomerizes as a right-handed, spiral filament on DNA at oriC.</text>
</comment>
<comment type="subcellular location">
    <subcellularLocation>
        <location evidence="1">Cytoplasm</location>
    </subcellularLocation>
</comment>
<comment type="domain">
    <text evidence="1">Domain I is involved in oligomerization and binding regulators, domain II is flexibile and of varying length in different bacteria, domain III forms the AAA+ region, while domain IV binds dsDNA.</text>
</comment>
<comment type="similarity">
    <text evidence="1">Belongs to the DnaA family.</text>
</comment>
<name>DNAA_CAMJE</name>
<keyword id="KW-0067">ATP-binding</keyword>
<keyword id="KW-0963">Cytoplasm</keyword>
<keyword id="KW-0235">DNA replication</keyword>
<keyword id="KW-0238">DNA-binding</keyword>
<keyword id="KW-0446">Lipid-binding</keyword>
<keyword id="KW-0547">Nucleotide-binding</keyword>
<keyword id="KW-1185">Reference proteome</keyword>
<organism>
    <name type="scientific">Campylobacter jejuni subsp. jejuni serotype O:2 (strain ATCC 700819 / NCTC 11168)</name>
    <dbReference type="NCBI Taxonomy" id="192222"/>
    <lineage>
        <taxon>Bacteria</taxon>
        <taxon>Pseudomonadati</taxon>
        <taxon>Campylobacterota</taxon>
        <taxon>Epsilonproteobacteria</taxon>
        <taxon>Campylobacterales</taxon>
        <taxon>Campylobacteraceae</taxon>
        <taxon>Campylobacter</taxon>
    </lineage>
</organism>
<sequence>MNPSQILENLKKELSENEYENYLSNLKFNEKQSKADLLVFNAPNELMAKFIQTKYGKKIAHFYEVQSGNKAIINIQAQSAKQSNKSTKIDIAHIKAQSTILNPSFTFESFVVGDSNKYAYGACKAIAHKDKLGKLYNPIFVYGPTGLGKTHLLQAVGNASLEMGKKVIYATSENFINDFTSNLKNGSLDKFHEKYRNCDVLLIDDVQFLGKTDKIQEEFFFIFNEIKNNDGQIIMTSDNPPNMLKGITERLKSRFAHGIIADITPPQLDTKIAIIRKKCEFNDINLSNDIINYIATSLGDNIREIEGIIISLNAYATILGQEITLELAKSVMKDHIKEKKENITIDDILSLVCKEFNIKPSDVKSNKKTQNIVTARRIVIYLARALTALTMPQLANYFEMKDHTAISHNVKKITEMIENDASLKAKIEELKNKILVKSQS</sequence>
<evidence type="ECO:0000255" key="1">
    <source>
        <dbReference type="HAMAP-Rule" id="MF_00377"/>
    </source>
</evidence>
<protein>
    <recommendedName>
        <fullName evidence="1">Chromosomal replication initiator protein DnaA</fullName>
    </recommendedName>
</protein>